<gene>
    <name evidence="2" type="primary">nuoB</name>
    <name type="ordered locus">WP0853</name>
</gene>
<protein>
    <recommendedName>
        <fullName evidence="2">NADH-quinone oxidoreductase subunit B</fullName>
        <ecNumber evidence="2">7.1.1.-</ecNumber>
    </recommendedName>
    <alternativeName>
        <fullName evidence="2">NADH dehydrogenase I subunit B</fullName>
    </alternativeName>
    <alternativeName>
        <fullName evidence="2">NDH-1 subunit B</fullName>
    </alternativeName>
</protein>
<comment type="function">
    <text evidence="1">NDH-1 shuttles electrons from NADH, via FMN and iron-sulfur (Fe-S) centers, to quinones in the respiratory chain. Couples the redox reaction to proton translocation (for every two electrons transferred, four hydrogen ions are translocated across the cytoplasmic membrane), and thus conserves the redox energy in a proton gradient (By similarity).</text>
</comment>
<comment type="catalytic activity">
    <reaction evidence="2">
        <text>a quinone + NADH + 5 H(+)(in) = a quinol + NAD(+) + 4 H(+)(out)</text>
        <dbReference type="Rhea" id="RHEA:57888"/>
        <dbReference type="ChEBI" id="CHEBI:15378"/>
        <dbReference type="ChEBI" id="CHEBI:24646"/>
        <dbReference type="ChEBI" id="CHEBI:57540"/>
        <dbReference type="ChEBI" id="CHEBI:57945"/>
        <dbReference type="ChEBI" id="CHEBI:132124"/>
    </reaction>
</comment>
<comment type="cofactor">
    <cofactor evidence="2">
        <name>[4Fe-4S] cluster</name>
        <dbReference type="ChEBI" id="CHEBI:49883"/>
    </cofactor>
    <text evidence="2">Binds 1 [4Fe-4S] cluster.</text>
</comment>
<comment type="subunit">
    <text evidence="2">NDH-1 is composed of 14 different subunits. Subunits NuoB, C, D, E, F, and G constitute the peripheral sector of the complex.</text>
</comment>
<comment type="subcellular location">
    <subcellularLocation>
        <location evidence="2">Cell membrane</location>
        <topology evidence="2">Peripheral membrane protein</topology>
        <orientation evidence="2">Cytoplasmic side</orientation>
    </subcellularLocation>
</comment>
<comment type="similarity">
    <text evidence="2">Belongs to the complex I 20 kDa subunit family.</text>
</comment>
<keyword id="KW-0004">4Fe-4S</keyword>
<keyword id="KW-1003">Cell membrane</keyword>
<keyword id="KW-0408">Iron</keyword>
<keyword id="KW-0411">Iron-sulfur</keyword>
<keyword id="KW-0472">Membrane</keyword>
<keyword id="KW-0479">Metal-binding</keyword>
<keyword id="KW-0520">NAD</keyword>
<keyword id="KW-0874">Quinone</keyword>
<keyword id="KW-1278">Translocase</keyword>
<keyword id="KW-0813">Transport</keyword>
<keyword id="KW-0830">Ubiquinone</keyword>
<reference key="1">
    <citation type="journal article" date="2008" name="Mol. Biol. Evol.">
        <title>Genome evolution of Wolbachia strain wPip from the Culex pipiens group.</title>
        <authorList>
            <person name="Klasson L."/>
            <person name="Walker T."/>
            <person name="Sebaihia M."/>
            <person name="Sanders M.J."/>
            <person name="Quail M.A."/>
            <person name="Lord A."/>
            <person name="Sanders S."/>
            <person name="Earl J."/>
            <person name="O'Neill S.L."/>
            <person name="Thomson N."/>
            <person name="Sinkins S.P."/>
            <person name="Parkhill J."/>
        </authorList>
    </citation>
    <scope>NUCLEOTIDE SEQUENCE [LARGE SCALE GENOMIC DNA]</scope>
    <source>
        <strain>wPip</strain>
    </source>
</reference>
<organism>
    <name type="scientific">Wolbachia pipientis subsp. Culex pipiens (strain wPip)</name>
    <dbReference type="NCBI Taxonomy" id="570417"/>
    <lineage>
        <taxon>Bacteria</taxon>
        <taxon>Pseudomonadati</taxon>
        <taxon>Pseudomonadota</taxon>
        <taxon>Alphaproteobacteria</taxon>
        <taxon>Rickettsiales</taxon>
        <taxon>Anaplasmataceae</taxon>
        <taxon>Wolbachieae</taxon>
        <taxon>Wolbachia</taxon>
    </lineage>
</organism>
<dbReference type="EC" id="7.1.1.-" evidence="2"/>
<dbReference type="EMBL" id="AM999887">
    <property type="protein sequence ID" value="CAQ54961.1"/>
    <property type="molecule type" value="Genomic_DNA"/>
</dbReference>
<dbReference type="RefSeq" id="WP_007302257.1">
    <property type="nucleotide sequence ID" value="NC_010981.1"/>
</dbReference>
<dbReference type="SMR" id="B3CM42"/>
<dbReference type="KEGG" id="wpi:WP0853"/>
<dbReference type="eggNOG" id="COG0377">
    <property type="taxonomic scope" value="Bacteria"/>
</dbReference>
<dbReference type="HOGENOM" id="CLU_055737_7_0_5"/>
<dbReference type="Proteomes" id="UP000008814">
    <property type="component" value="Chromosome"/>
</dbReference>
<dbReference type="GO" id="GO:0005886">
    <property type="term" value="C:plasma membrane"/>
    <property type="evidence" value="ECO:0007669"/>
    <property type="project" value="UniProtKB-SubCell"/>
</dbReference>
<dbReference type="GO" id="GO:0045271">
    <property type="term" value="C:respiratory chain complex I"/>
    <property type="evidence" value="ECO:0007669"/>
    <property type="project" value="TreeGrafter"/>
</dbReference>
<dbReference type="GO" id="GO:0051539">
    <property type="term" value="F:4 iron, 4 sulfur cluster binding"/>
    <property type="evidence" value="ECO:0007669"/>
    <property type="project" value="UniProtKB-KW"/>
</dbReference>
<dbReference type="GO" id="GO:0005506">
    <property type="term" value="F:iron ion binding"/>
    <property type="evidence" value="ECO:0007669"/>
    <property type="project" value="UniProtKB-UniRule"/>
</dbReference>
<dbReference type="GO" id="GO:0008137">
    <property type="term" value="F:NADH dehydrogenase (ubiquinone) activity"/>
    <property type="evidence" value="ECO:0007669"/>
    <property type="project" value="InterPro"/>
</dbReference>
<dbReference type="GO" id="GO:0050136">
    <property type="term" value="F:NADH:ubiquinone reductase (non-electrogenic) activity"/>
    <property type="evidence" value="ECO:0007669"/>
    <property type="project" value="UniProtKB-UniRule"/>
</dbReference>
<dbReference type="GO" id="GO:0048038">
    <property type="term" value="F:quinone binding"/>
    <property type="evidence" value="ECO:0007669"/>
    <property type="project" value="UniProtKB-KW"/>
</dbReference>
<dbReference type="GO" id="GO:0009060">
    <property type="term" value="P:aerobic respiration"/>
    <property type="evidence" value="ECO:0007669"/>
    <property type="project" value="TreeGrafter"/>
</dbReference>
<dbReference type="GO" id="GO:0015990">
    <property type="term" value="P:electron transport coupled proton transport"/>
    <property type="evidence" value="ECO:0007669"/>
    <property type="project" value="TreeGrafter"/>
</dbReference>
<dbReference type="FunFam" id="3.40.50.12280:FF:000001">
    <property type="entry name" value="NADH-quinone oxidoreductase subunit B 2"/>
    <property type="match status" value="1"/>
</dbReference>
<dbReference type="Gene3D" id="3.40.50.12280">
    <property type="match status" value="1"/>
</dbReference>
<dbReference type="HAMAP" id="MF_01356">
    <property type="entry name" value="NDH1_NuoB"/>
    <property type="match status" value="1"/>
</dbReference>
<dbReference type="InterPro" id="IPR006137">
    <property type="entry name" value="NADH_UbQ_OxRdtase-like_20kDa"/>
</dbReference>
<dbReference type="InterPro" id="IPR006138">
    <property type="entry name" value="NADH_UQ_OxRdtase_20Kd_su"/>
</dbReference>
<dbReference type="NCBIfam" id="TIGR01957">
    <property type="entry name" value="nuoB_fam"/>
    <property type="match status" value="1"/>
</dbReference>
<dbReference type="NCBIfam" id="NF005012">
    <property type="entry name" value="PRK06411.1"/>
    <property type="match status" value="1"/>
</dbReference>
<dbReference type="PANTHER" id="PTHR11995">
    <property type="entry name" value="NADH DEHYDROGENASE"/>
    <property type="match status" value="1"/>
</dbReference>
<dbReference type="PANTHER" id="PTHR11995:SF14">
    <property type="entry name" value="NADH DEHYDROGENASE [UBIQUINONE] IRON-SULFUR PROTEIN 7, MITOCHONDRIAL"/>
    <property type="match status" value="1"/>
</dbReference>
<dbReference type="Pfam" id="PF01058">
    <property type="entry name" value="Oxidored_q6"/>
    <property type="match status" value="1"/>
</dbReference>
<dbReference type="SUPFAM" id="SSF56770">
    <property type="entry name" value="HydA/Nqo6-like"/>
    <property type="match status" value="1"/>
</dbReference>
<dbReference type="PROSITE" id="PS01150">
    <property type="entry name" value="COMPLEX1_20K"/>
    <property type="match status" value="1"/>
</dbReference>
<evidence type="ECO:0000250" key="1"/>
<evidence type="ECO:0000255" key="2">
    <source>
        <dbReference type="HAMAP-Rule" id="MF_01356"/>
    </source>
</evidence>
<name>NUOB_WOLPP</name>
<sequence length="167" mass="18668">MGINLSNGDWNRYKKEGFLITKFGDLIDYIMNWARSGSLWPMTFGLACCAVEMMHTASSRYDLDRYGIIFRASPRQADVMIVAGTLTNKMAAALRKVYDQMADPKYVVSMGSCANGGGYYHYSYSVVRGCDRIVPVDVYVPGCPPTAEALLYGMLCLQNKIKRTKNI</sequence>
<feature type="chain" id="PRO_0000358506" description="NADH-quinone oxidoreductase subunit B">
    <location>
        <begin position="1"/>
        <end position="167"/>
    </location>
</feature>
<feature type="binding site" evidence="2">
    <location>
        <position position="48"/>
    </location>
    <ligand>
        <name>[4Fe-4S] cluster</name>
        <dbReference type="ChEBI" id="CHEBI:49883"/>
    </ligand>
</feature>
<feature type="binding site" evidence="2">
    <location>
        <position position="49"/>
    </location>
    <ligand>
        <name>[4Fe-4S] cluster</name>
        <dbReference type="ChEBI" id="CHEBI:49883"/>
    </ligand>
</feature>
<feature type="binding site" evidence="2">
    <location>
        <position position="113"/>
    </location>
    <ligand>
        <name>[4Fe-4S] cluster</name>
        <dbReference type="ChEBI" id="CHEBI:49883"/>
    </ligand>
</feature>
<feature type="binding site" evidence="2">
    <location>
        <position position="143"/>
    </location>
    <ligand>
        <name>[4Fe-4S] cluster</name>
        <dbReference type="ChEBI" id="CHEBI:49883"/>
    </ligand>
</feature>
<proteinExistence type="inferred from homology"/>
<accession>B3CM42</accession>